<evidence type="ECO:0000255" key="1">
    <source>
        <dbReference type="HAMAP-Rule" id="MF_01149"/>
    </source>
</evidence>
<name>YCAD_ECO81</name>
<dbReference type="EMBL" id="CU928162">
    <property type="protein sequence ID" value="CAR07130.1"/>
    <property type="molecule type" value="Genomic_DNA"/>
</dbReference>
<dbReference type="RefSeq" id="WP_000109282.1">
    <property type="nucleotide sequence ID" value="NC_011745.1"/>
</dbReference>
<dbReference type="SMR" id="B7MS16"/>
<dbReference type="KEGG" id="ecq:ECED1_0928"/>
<dbReference type="HOGENOM" id="CLU_035018_1_2_6"/>
<dbReference type="Proteomes" id="UP000000748">
    <property type="component" value="Chromosome"/>
</dbReference>
<dbReference type="GO" id="GO:0005886">
    <property type="term" value="C:plasma membrane"/>
    <property type="evidence" value="ECO:0007669"/>
    <property type="project" value="UniProtKB-SubCell"/>
</dbReference>
<dbReference type="GO" id="GO:0022857">
    <property type="term" value="F:transmembrane transporter activity"/>
    <property type="evidence" value="ECO:0007669"/>
    <property type="project" value="UniProtKB-UniRule"/>
</dbReference>
<dbReference type="CDD" id="cd17477">
    <property type="entry name" value="MFS_YcaD_like"/>
    <property type="match status" value="1"/>
</dbReference>
<dbReference type="FunFam" id="1.20.1250.20:FF:000041">
    <property type="entry name" value="Uncharacterized MFS-type transporter YcaD"/>
    <property type="match status" value="1"/>
</dbReference>
<dbReference type="FunFam" id="1.20.1250.20:FF:000066">
    <property type="entry name" value="Uncharacterized MFS-type transporter YcaD"/>
    <property type="match status" value="1"/>
</dbReference>
<dbReference type="Gene3D" id="1.20.1250.20">
    <property type="entry name" value="MFS general substrate transporter like domains"/>
    <property type="match status" value="2"/>
</dbReference>
<dbReference type="HAMAP" id="MF_01149">
    <property type="entry name" value="MFS_YcaD"/>
    <property type="match status" value="1"/>
</dbReference>
<dbReference type="InterPro" id="IPR011701">
    <property type="entry name" value="MFS"/>
</dbReference>
<dbReference type="InterPro" id="IPR020846">
    <property type="entry name" value="MFS_dom"/>
</dbReference>
<dbReference type="InterPro" id="IPR036259">
    <property type="entry name" value="MFS_trans_sf"/>
</dbReference>
<dbReference type="InterPro" id="IPR023745">
    <property type="entry name" value="MFS_YcaD"/>
</dbReference>
<dbReference type="InterPro" id="IPR047200">
    <property type="entry name" value="MFS_YcaD-like"/>
</dbReference>
<dbReference type="NCBIfam" id="NF002962">
    <property type="entry name" value="PRK03633.1"/>
    <property type="match status" value="1"/>
</dbReference>
<dbReference type="PANTHER" id="PTHR23521">
    <property type="entry name" value="TRANSPORTER MFS SUPERFAMILY"/>
    <property type="match status" value="1"/>
</dbReference>
<dbReference type="PANTHER" id="PTHR23521:SF2">
    <property type="entry name" value="TRANSPORTER MFS SUPERFAMILY"/>
    <property type="match status" value="1"/>
</dbReference>
<dbReference type="Pfam" id="PF07690">
    <property type="entry name" value="MFS_1"/>
    <property type="match status" value="1"/>
</dbReference>
<dbReference type="SUPFAM" id="SSF103473">
    <property type="entry name" value="MFS general substrate transporter"/>
    <property type="match status" value="1"/>
</dbReference>
<dbReference type="PROSITE" id="PS50850">
    <property type="entry name" value="MFS"/>
    <property type="match status" value="1"/>
</dbReference>
<reference key="1">
    <citation type="journal article" date="2009" name="PLoS Genet.">
        <title>Organised genome dynamics in the Escherichia coli species results in highly diverse adaptive paths.</title>
        <authorList>
            <person name="Touchon M."/>
            <person name="Hoede C."/>
            <person name="Tenaillon O."/>
            <person name="Barbe V."/>
            <person name="Baeriswyl S."/>
            <person name="Bidet P."/>
            <person name="Bingen E."/>
            <person name="Bonacorsi S."/>
            <person name="Bouchier C."/>
            <person name="Bouvet O."/>
            <person name="Calteau A."/>
            <person name="Chiapello H."/>
            <person name="Clermont O."/>
            <person name="Cruveiller S."/>
            <person name="Danchin A."/>
            <person name="Diard M."/>
            <person name="Dossat C."/>
            <person name="Karoui M.E."/>
            <person name="Frapy E."/>
            <person name="Garry L."/>
            <person name="Ghigo J.M."/>
            <person name="Gilles A.M."/>
            <person name="Johnson J."/>
            <person name="Le Bouguenec C."/>
            <person name="Lescat M."/>
            <person name="Mangenot S."/>
            <person name="Martinez-Jehanne V."/>
            <person name="Matic I."/>
            <person name="Nassif X."/>
            <person name="Oztas S."/>
            <person name="Petit M.A."/>
            <person name="Pichon C."/>
            <person name="Rouy Z."/>
            <person name="Ruf C.S."/>
            <person name="Schneider D."/>
            <person name="Tourret J."/>
            <person name="Vacherie B."/>
            <person name="Vallenet D."/>
            <person name="Medigue C."/>
            <person name="Rocha E.P.C."/>
            <person name="Denamur E."/>
        </authorList>
    </citation>
    <scope>NUCLEOTIDE SEQUENCE [LARGE SCALE GENOMIC DNA]</scope>
    <source>
        <strain>ED1a</strain>
    </source>
</reference>
<organism>
    <name type="scientific">Escherichia coli O81 (strain ED1a)</name>
    <dbReference type="NCBI Taxonomy" id="585397"/>
    <lineage>
        <taxon>Bacteria</taxon>
        <taxon>Pseudomonadati</taxon>
        <taxon>Pseudomonadota</taxon>
        <taxon>Gammaproteobacteria</taxon>
        <taxon>Enterobacterales</taxon>
        <taxon>Enterobacteriaceae</taxon>
        <taxon>Escherichia</taxon>
    </lineage>
</organism>
<keyword id="KW-0997">Cell inner membrane</keyword>
<keyword id="KW-1003">Cell membrane</keyword>
<keyword id="KW-0472">Membrane</keyword>
<keyword id="KW-0812">Transmembrane</keyword>
<keyword id="KW-1133">Transmembrane helix</keyword>
<keyword id="KW-0813">Transport</keyword>
<feature type="chain" id="PRO_1000164165" description="Uncharacterized MFS-type transporter YcaD">
    <location>
        <begin position="1"/>
        <end position="382"/>
    </location>
</feature>
<feature type="transmembrane region" description="Helical" evidence="1">
    <location>
        <begin position="14"/>
        <end position="34"/>
    </location>
</feature>
<feature type="transmembrane region" description="Helical" evidence="1">
    <location>
        <begin position="45"/>
        <end position="65"/>
    </location>
</feature>
<feature type="transmembrane region" description="Helical" evidence="1">
    <location>
        <begin position="79"/>
        <end position="99"/>
    </location>
</feature>
<feature type="transmembrane region" description="Helical" evidence="1">
    <location>
        <begin position="102"/>
        <end position="122"/>
    </location>
</feature>
<feature type="transmembrane region" description="Helical" evidence="1">
    <location>
        <begin position="131"/>
        <end position="151"/>
    </location>
</feature>
<feature type="transmembrane region" description="Helical" evidence="1">
    <location>
        <begin position="157"/>
        <end position="177"/>
    </location>
</feature>
<feature type="transmembrane region" description="Helical" evidence="1">
    <location>
        <begin position="204"/>
        <end position="224"/>
    </location>
</feature>
<feature type="transmembrane region" description="Helical" evidence="1">
    <location>
        <begin position="235"/>
        <end position="255"/>
    </location>
</feature>
<feature type="transmembrane region" description="Helical" evidence="1">
    <location>
        <begin position="270"/>
        <end position="290"/>
    </location>
</feature>
<feature type="transmembrane region" description="Helical" evidence="1">
    <location>
        <begin position="291"/>
        <end position="311"/>
    </location>
</feature>
<feature type="transmembrane region" description="Helical" evidence="1">
    <location>
        <begin position="325"/>
        <end position="345"/>
    </location>
</feature>
<feature type="transmembrane region" description="Helical" evidence="1">
    <location>
        <begin position="348"/>
        <end position="368"/>
    </location>
</feature>
<proteinExistence type="inferred from homology"/>
<sequence length="382" mass="41455">MSTYTRPVMLLLSGLLLLTLAIAVLNTLVPLWLAQEHMSTWQVGVVSSSYFTGNLVGTLLTGYVIKRIGFNRSYYLASFIFAAGCAGLGLMIGFWSWLAWRFVAGIGCAMIWVVVESALMCSGTSRNRGRLLAAYMMVYYVGTFLGQLLVSKVSTELMSVLPWVTGLTLAGILPLLFTHVLNQQAENHDSTSITSMLKLRQARLGVNGCIISGIVLGSLYGLMPLYLNHKGVSNASIGFWMAVLVSAGILGQWPIGRLADKFGRLLVLRVQVFVVILGSIAMLSQAAMAPALFILGAAGFTLYPVAMAWACEKVEHHQLVAMNQALLLSYTVGSLLGPSFTAMLMQNFSDNLLFIMIASVSFIYLLMLLRNAGHTPKPVAHV</sequence>
<comment type="subcellular location">
    <subcellularLocation>
        <location evidence="1">Cell inner membrane</location>
        <topology evidence="1">Multi-pass membrane protein</topology>
    </subcellularLocation>
</comment>
<comment type="similarity">
    <text evidence="1">Belongs to the major facilitator superfamily. YcaD (TC 2.A.1.26) family.</text>
</comment>
<protein>
    <recommendedName>
        <fullName evidence="1">Uncharacterized MFS-type transporter YcaD</fullName>
    </recommendedName>
</protein>
<accession>B7MS16</accession>
<gene>
    <name evidence="1" type="primary">ycaD</name>
    <name type="ordered locus">ECED1_0928</name>
</gene>